<comment type="function">
    <text evidence="1">Catalyzes the synthesis of Und-PP-GlcNAc-ManNAcA-Fuc4NAc (Lipid III), the third lipid-linked intermediate involved in ECA synthesis.</text>
</comment>
<comment type="catalytic activity">
    <reaction evidence="1">
        <text>beta-D-ManNAcA-(1-&gt;4)-alpha-D-GlcNAc-di-trans,octa-cis-undecaprenyl diphosphate + dTDP-4-acetamido-4,6-dideoxy-alpha-D-galactose = alpha-D-FucNAc4-(1-&gt;4)-beta-D-ManNAcA-(1-&gt;4)-D-GlcNAc-undecaprenyl diphosphate + dTDP + H(+)</text>
        <dbReference type="Rhea" id="RHEA:28759"/>
        <dbReference type="ChEBI" id="CHEBI:15378"/>
        <dbReference type="ChEBI" id="CHEBI:58369"/>
        <dbReference type="ChEBI" id="CHEBI:61495"/>
        <dbReference type="ChEBI" id="CHEBI:61496"/>
        <dbReference type="ChEBI" id="CHEBI:68493"/>
        <dbReference type="EC" id="2.4.1.325"/>
    </reaction>
</comment>
<comment type="pathway">
    <text evidence="1">Bacterial outer membrane biogenesis; enterobacterial common antigen biosynthesis.</text>
</comment>
<comment type="subcellular location">
    <subcellularLocation>
        <location evidence="1">Cell inner membrane</location>
        <topology evidence="1">Peripheral membrane protein</topology>
    </subcellularLocation>
</comment>
<comment type="similarity">
    <text evidence="1">Belongs to the glycosyltransferase 56 family.</text>
</comment>
<sequence>MTVLIHVLGSDIPHHNRTVLRFFNDALAATSEHAREFMVAGKDDGLSDSCLALSVQFFPGKKSLAEAVIAKAKANRQQRFFFHGQFNPKLWLALLSGGIKPSQFFWHIWGADLYELSSGLRYKLFYPLRRLAQKRVGCVFATRGDLSFFAKTHPKVRGELLYFPTRMDPSLNTMANDRQREGKMTILVGNSGDRSNEHIAALRAVHQQFGDTVKVVVPMGYPPNNEAYIEEVRQAGLELFSEENLQVLSEKLEFDAYLTLLRQCDLGYFIFARQQGIGTLCLLIQAGIPCVLNRENPFWQDMTEQHLPVLFTTDDLNEDIVREAQRQLASVDKNTIAFFSPNYLQGWQRALAIAAGEVA</sequence>
<keyword id="KW-0997">Cell inner membrane</keyword>
<keyword id="KW-1003">Cell membrane</keyword>
<keyword id="KW-0328">Glycosyltransferase</keyword>
<keyword id="KW-0472">Membrane</keyword>
<keyword id="KW-1185">Reference proteome</keyword>
<keyword id="KW-0808">Transferase</keyword>
<organism>
    <name type="scientific">Escherichia coli O6:H1 (strain CFT073 / ATCC 700928 / UPEC)</name>
    <dbReference type="NCBI Taxonomy" id="199310"/>
    <lineage>
        <taxon>Bacteria</taxon>
        <taxon>Pseudomonadati</taxon>
        <taxon>Pseudomonadota</taxon>
        <taxon>Gammaproteobacteria</taxon>
        <taxon>Enterobacterales</taxon>
        <taxon>Enterobacteriaceae</taxon>
        <taxon>Escherichia</taxon>
    </lineage>
</organism>
<name>WECF_ECOL6</name>
<protein>
    <recommendedName>
        <fullName evidence="1">TDP-N-acetylfucosamine:lipid II N-acetylfucosaminyltransferase</fullName>
        <ecNumber evidence="1">2.4.1.325</ecNumber>
    </recommendedName>
    <alternativeName>
        <fullName evidence="1">4-alpha-L-fucosyltransferase</fullName>
    </alternativeName>
    <alternativeName>
        <fullName evidence="1">TDP-Fuc4NAc:lipid II Fuc4NAc transferase</fullName>
        <shortName evidence="1">Fuc4NAc transferase</shortName>
    </alternativeName>
</protein>
<evidence type="ECO:0000255" key="1">
    <source>
        <dbReference type="HAMAP-Rule" id="MF_01002"/>
    </source>
</evidence>
<gene>
    <name evidence="1" type="primary">wecF</name>
    <name evidence="1" type="synonym">rffT</name>
    <name type="ordered locus">c4714</name>
</gene>
<feature type="chain" id="PRO_0000216181" description="TDP-N-acetylfucosamine:lipid II N-acetylfucosaminyltransferase">
    <location>
        <begin position="1"/>
        <end position="359"/>
    </location>
</feature>
<proteinExistence type="inferred from homology"/>
<accession>Q8FBP9</accession>
<dbReference type="EC" id="2.4.1.325" evidence="1"/>
<dbReference type="EMBL" id="AE014075">
    <property type="protein sequence ID" value="AAN83147.1"/>
    <property type="molecule type" value="Genomic_DNA"/>
</dbReference>
<dbReference type="RefSeq" id="WP_000217213.1">
    <property type="nucleotide sequence ID" value="NZ_CP051263.1"/>
</dbReference>
<dbReference type="STRING" id="199310.c4714"/>
<dbReference type="CAZy" id="GT56">
    <property type="family name" value="Glycosyltransferase Family 56"/>
</dbReference>
<dbReference type="KEGG" id="ecc:c4714"/>
<dbReference type="eggNOG" id="COG1819">
    <property type="taxonomic scope" value="Bacteria"/>
</dbReference>
<dbReference type="HOGENOM" id="CLU_066584_0_0_6"/>
<dbReference type="BioCyc" id="ECOL199310:C4714-MONOMER"/>
<dbReference type="UniPathway" id="UPA00566"/>
<dbReference type="Proteomes" id="UP000001410">
    <property type="component" value="Chromosome"/>
</dbReference>
<dbReference type="GO" id="GO:0005886">
    <property type="term" value="C:plasma membrane"/>
    <property type="evidence" value="ECO:0007669"/>
    <property type="project" value="UniProtKB-SubCell"/>
</dbReference>
<dbReference type="GO" id="GO:0102031">
    <property type="term" value="F:4-acetamido-4,6-dideoxy-D-galactose transferase activity"/>
    <property type="evidence" value="ECO:0007669"/>
    <property type="project" value="UniProtKB-EC"/>
</dbReference>
<dbReference type="GO" id="GO:0008417">
    <property type="term" value="F:fucosyltransferase activity"/>
    <property type="evidence" value="ECO:0007669"/>
    <property type="project" value="InterPro"/>
</dbReference>
<dbReference type="GO" id="GO:0009246">
    <property type="term" value="P:enterobacterial common antigen biosynthetic process"/>
    <property type="evidence" value="ECO:0007669"/>
    <property type="project" value="UniProtKB-UniRule"/>
</dbReference>
<dbReference type="GO" id="GO:0036065">
    <property type="term" value="P:fucosylation"/>
    <property type="evidence" value="ECO:0007669"/>
    <property type="project" value="InterPro"/>
</dbReference>
<dbReference type="HAMAP" id="MF_01002">
    <property type="entry name" value="WecF_RffT"/>
    <property type="match status" value="1"/>
</dbReference>
<dbReference type="InterPro" id="IPR009993">
    <property type="entry name" value="WecF"/>
</dbReference>
<dbReference type="NCBIfam" id="NF002752">
    <property type="entry name" value="PRK02797.1-1"/>
    <property type="match status" value="1"/>
</dbReference>
<dbReference type="NCBIfam" id="NF002753">
    <property type="entry name" value="PRK02797.1-2"/>
    <property type="match status" value="1"/>
</dbReference>
<dbReference type="NCBIfam" id="NF002754">
    <property type="entry name" value="PRK02797.1-3"/>
    <property type="match status" value="1"/>
</dbReference>
<dbReference type="Pfam" id="PF07429">
    <property type="entry name" value="Glyco_transf_56"/>
    <property type="match status" value="1"/>
</dbReference>
<reference key="1">
    <citation type="journal article" date="2002" name="Proc. Natl. Acad. Sci. U.S.A.">
        <title>Extensive mosaic structure revealed by the complete genome sequence of uropathogenic Escherichia coli.</title>
        <authorList>
            <person name="Welch R.A."/>
            <person name="Burland V."/>
            <person name="Plunkett G. III"/>
            <person name="Redford P."/>
            <person name="Roesch P."/>
            <person name="Rasko D."/>
            <person name="Buckles E.L."/>
            <person name="Liou S.-R."/>
            <person name="Boutin A."/>
            <person name="Hackett J."/>
            <person name="Stroud D."/>
            <person name="Mayhew G.F."/>
            <person name="Rose D.J."/>
            <person name="Zhou S."/>
            <person name="Schwartz D.C."/>
            <person name="Perna N.T."/>
            <person name="Mobley H.L.T."/>
            <person name="Donnenberg M.S."/>
            <person name="Blattner F.R."/>
        </authorList>
    </citation>
    <scope>NUCLEOTIDE SEQUENCE [LARGE SCALE GENOMIC DNA]</scope>
    <source>
        <strain>CFT073 / ATCC 700928 / UPEC</strain>
    </source>
</reference>